<gene>
    <name evidence="1" type="primary">nfo</name>
    <name type="ordered locus">Mfl333</name>
</gene>
<feature type="chain" id="PRO_0000190849" description="Probable endonuclease 4">
    <location>
        <begin position="1"/>
        <end position="293"/>
    </location>
</feature>
<feature type="binding site" evidence="1">
    <location>
        <position position="77"/>
    </location>
    <ligand>
        <name>Zn(2+)</name>
        <dbReference type="ChEBI" id="CHEBI:29105"/>
        <label>1</label>
    </ligand>
</feature>
<feature type="binding site" evidence="1">
    <location>
        <position position="118"/>
    </location>
    <ligand>
        <name>Zn(2+)</name>
        <dbReference type="ChEBI" id="CHEBI:29105"/>
        <label>1</label>
    </ligand>
</feature>
<feature type="binding site" evidence="1">
    <location>
        <position position="153"/>
    </location>
    <ligand>
        <name>Zn(2+)</name>
        <dbReference type="ChEBI" id="CHEBI:29105"/>
        <label>1</label>
    </ligand>
</feature>
<feature type="binding site" evidence="1">
    <location>
        <position position="153"/>
    </location>
    <ligand>
        <name>Zn(2+)</name>
        <dbReference type="ChEBI" id="CHEBI:29105"/>
        <label>2</label>
    </ligand>
</feature>
<feature type="binding site" evidence="1">
    <location>
        <position position="187"/>
    </location>
    <ligand>
        <name>Zn(2+)</name>
        <dbReference type="ChEBI" id="CHEBI:29105"/>
        <label>2</label>
    </ligand>
</feature>
<feature type="binding site" evidence="1">
    <location>
        <position position="190"/>
    </location>
    <ligand>
        <name>Zn(2+)</name>
        <dbReference type="ChEBI" id="CHEBI:29105"/>
        <label>3</label>
    </ligand>
</feature>
<feature type="binding site" evidence="1">
    <location>
        <position position="221"/>
    </location>
    <ligand>
        <name>Zn(2+)</name>
        <dbReference type="ChEBI" id="CHEBI:29105"/>
        <label>2</label>
    </ligand>
</feature>
<feature type="binding site" evidence="1">
    <location>
        <position position="234"/>
    </location>
    <ligand>
        <name>Zn(2+)</name>
        <dbReference type="ChEBI" id="CHEBI:29105"/>
        <label>3</label>
    </ligand>
</feature>
<feature type="binding site" evidence="1">
    <location>
        <position position="236"/>
    </location>
    <ligand>
        <name>Zn(2+)</name>
        <dbReference type="ChEBI" id="CHEBI:29105"/>
        <label>3</label>
    </ligand>
</feature>
<feature type="binding site" evidence="1">
    <location>
        <position position="266"/>
    </location>
    <ligand>
        <name>Zn(2+)</name>
        <dbReference type="ChEBI" id="CHEBI:29105"/>
        <label>2</label>
    </ligand>
</feature>
<sequence length="293" mass="33183">MKKPILGSHVGMSKSNKHGEYLIGSVKEALSYEANTLMFYTGAPQNSVRTATDKLYIEEFNQLLKENNINKDHIVVHAPYIINISNPVNQTTWDFGVDFLKQEIKRCEDIGVKILVLHPGARLKGDYTDALNALVKGLNAVASSQTNVIIALETMAGKGTEVGLSLNDFKYVIDNVNEPEKVAVCLDTCHMHDAGYDFNNWELIKEEINKTIGKDKVLCFHLNDSKNPLLAHKDRHENIGYGYIGFDNLLKVLWDEEYIDIPKILETPYVEDKPPYKEEIENLINKNFSKKVK</sequence>
<keyword id="KW-0227">DNA damage</keyword>
<keyword id="KW-0234">DNA repair</keyword>
<keyword id="KW-0255">Endonuclease</keyword>
<keyword id="KW-0378">Hydrolase</keyword>
<keyword id="KW-0479">Metal-binding</keyword>
<keyword id="KW-0540">Nuclease</keyword>
<keyword id="KW-1185">Reference proteome</keyword>
<keyword id="KW-0862">Zinc</keyword>
<evidence type="ECO:0000255" key="1">
    <source>
        <dbReference type="HAMAP-Rule" id="MF_00152"/>
    </source>
</evidence>
<dbReference type="EC" id="3.1.21.2" evidence="1"/>
<dbReference type="EMBL" id="AE017263">
    <property type="protein sequence ID" value="AAT75690.1"/>
    <property type="molecule type" value="Genomic_DNA"/>
</dbReference>
<dbReference type="RefSeq" id="WP_011183230.1">
    <property type="nucleotide sequence ID" value="NC_006055.1"/>
</dbReference>
<dbReference type="RefSeq" id="YP_053574.1">
    <property type="nucleotide sequence ID" value="NC_006055.1"/>
</dbReference>
<dbReference type="SMR" id="Q6F1D3"/>
<dbReference type="STRING" id="265311.Mfl333"/>
<dbReference type="PaxDb" id="265311-Mfl333"/>
<dbReference type="EnsemblBacteria" id="AAT75690">
    <property type="protein sequence ID" value="AAT75690"/>
    <property type="gene ID" value="Mfl333"/>
</dbReference>
<dbReference type="GeneID" id="2898012"/>
<dbReference type="KEGG" id="mfl:Mfl333"/>
<dbReference type="PATRIC" id="fig|265311.5.peg.333"/>
<dbReference type="eggNOG" id="COG0648">
    <property type="taxonomic scope" value="Bacteria"/>
</dbReference>
<dbReference type="HOGENOM" id="CLU_025885_4_1_14"/>
<dbReference type="OrthoDB" id="9805666at2"/>
<dbReference type="Proteomes" id="UP000006647">
    <property type="component" value="Chromosome"/>
</dbReference>
<dbReference type="GO" id="GO:0008833">
    <property type="term" value="F:deoxyribonuclease IV (phage-T4-induced) activity"/>
    <property type="evidence" value="ECO:0007669"/>
    <property type="project" value="UniProtKB-UniRule"/>
</dbReference>
<dbReference type="GO" id="GO:0003677">
    <property type="term" value="F:DNA binding"/>
    <property type="evidence" value="ECO:0007669"/>
    <property type="project" value="InterPro"/>
</dbReference>
<dbReference type="GO" id="GO:0003906">
    <property type="term" value="F:DNA-(apurinic or apyrimidinic site) endonuclease activity"/>
    <property type="evidence" value="ECO:0007669"/>
    <property type="project" value="TreeGrafter"/>
</dbReference>
<dbReference type="GO" id="GO:0008081">
    <property type="term" value="F:phosphoric diester hydrolase activity"/>
    <property type="evidence" value="ECO:0007669"/>
    <property type="project" value="TreeGrafter"/>
</dbReference>
<dbReference type="GO" id="GO:0008270">
    <property type="term" value="F:zinc ion binding"/>
    <property type="evidence" value="ECO:0007669"/>
    <property type="project" value="UniProtKB-UniRule"/>
</dbReference>
<dbReference type="GO" id="GO:0006284">
    <property type="term" value="P:base-excision repair"/>
    <property type="evidence" value="ECO:0007669"/>
    <property type="project" value="TreeGrafter"/>
</dbReference>
<dbReference type="CDD" id="cd00019">
    <property type="entry name" value="AP2Ec"/>
    <property type="match status" value="1"/>
</dbReference>
<dbReference type="FunFam" id="3.20.20.150:FF:000001">
    <property type="entry name" value="Probable endonuclease 4"/>
    <property type="match status" value="1"/>
</dbReference>
<dbReference type="Gene3D" id="3.20.20.150">
    <property type="entry name" value="Divalent-metal-dependent TIM barrel enzymes"/>
    <property type="match status" value="1"/>
</dbReference>
<dbReference type="HAMAP" id="MF_00152">
    <property type="entry name" value="Nfo"/>
    <property type="match status" value="1"/>
</dbReference>
<dbReference type="InterPro" id="IPR001719">
    <property type="entry name" value="AP_endonuc_2"/>
</dbReference>
<dbReference type="InterPro" id="IPR018246">
    <property type="entry name" value="AP_endonuc_F2_Zn_BS"/>
</dbReference>
<dbReference type="InterPro" id="IPR036237">
    <property type="entry name" value="Xyl_isomerase-like_sf"/>
</dbReference>
<dbReference type="InterPro" id="IPR013022">
    <property type="entry name" value="Xyl_isomerase-like_TIM-brl"/>
</dbReference>
<dbReference type="NCBIfam" id="TIGR00587">
    <property type="entry name" value="nfo"/>
    <property type="match status" value="1"/>
</dbReference>
<dbReference type="NCBIfam" id="NF002196">
    <property type="entry name" value="PRK01060.1-1"/>
    <property type="match status" value="1"/>
</dbReference>
<dbReference type="PANTHER" id="PTHR21445:SF0">
    <property type="entry name" value="APURINIC-APYRIMIDINIC ENDONUCLEASE"/>
    <property type="match status" value="1"/>
</dbReference>
<dbReference type="PANTHER" id="PTHR21445">
    <property type="entry name" value="ENDONUCLEASE IV ENDODEOXYRIBONUCLEASE IV"/>
    <property type="match status" value="1"/>
</dbReference>
<dbReference type="Pfam" id="PF01261">
    <property type="entry name" value="AP_endonuc_2"/>
    <property type="match status" value="1"/>
</dbReference>
<dbReference type="SMART" id="SM00518">
    <property type="entry name" value="AP2Ec"/>
    <property type="match status" value="1"/>
</dbReference>
<dbReference type="SUPFAM" id="SSF51658">
    <property type="entry name" value="Xylose isomerase-like"/>
    <property type="match status" value="1"/>
</dbReference>
<dbReference type="PROSITE" id="PS00730">
    <property type="entry name" value="AP_NUCLEASE_F2_2"/>
    <property type="match status" value="1"/>
</dbReference>
<dbReference type="PROSITE" id="PS51432">
    <property type="entry name" value="AP_NUCLEASE_F2_4"/>
    <property type="match status" value="1"/>
</dbReference>
<accession>Q6F1D3</accession>
<name>END4_MESFL</name>
<reference key="1">
    <citation type="submission" date="2004-06" db="EMBL/GenBank/DDBJ databases">
        <authorList>
            <person name="Birren B.W."/>
            <person name="Stange-Thomann N."/>
            <person name="Hafez N."/>
            <person name="DeCaprio D."/>
            <person name="Fisher S."/>
            <person name="Butler J."/>
            <person name="Elkins T."/>
            <person name="Kodira C.D."/>
            <person name="Major J."/>
            <person name="Wang S."/>
            <person name="Nicol R."/>
            <person name="Nusbaum C."/>
        </authorList>
    </citation>
    <scope>NUCLEOTIDE SEQUENCE [LARGE SCALE GENOMIC DNA]</scope>
    <source>
        <strain>ATCC 33453 / NBRC 100688 / NCTC 11704 / L1</strain>
    </source>
</reference>
<protein>
    <recommendedName>
        <fullName evidence="1">Probable endonuclease 4</fullName>
        <ecNumber evidence="1">3.1.21.2</ecNumber>
    </recommendedName>
    <alternativeName>
        <fullName evidence="1">Endodeoxyribonuclease IV</fullName>
    </alternativeName>
    <alternativeName>
        <fullName evidence="1">Endonuclease IV</fullName>
    </alternativeName>
</protein>
<organism>
    <name type="scientific">Mesoplasma florum (strain ATCC 33453 / NBRC 100688 / NCTC 11704 / L1)</name>
    <name type="common">Acholeplasma florum</name>
    <dbReference type="NCBI Taxonomy" id="265311"/>
    <lineage>
        <taxon>Bacteria</taxon>
        <taxon>Bacillati</taxon>
        <taxon>Mycoplasmatota</taxon>
        <taxon>Mollicutes</taxon>
        <taxon>Entomoplasmatales</taxon>
        <taxon>Entomoplasmataceae</taxon>
        <taxon>Mesoplasma</taxon>
    </lineage>
</organism>
<proteinExistence type="inferred from homology"/>
<comment type="function">
    <text evidence="1">Endonuclease IV plays a role in DNA repair. It cleaves phosphodiester bonds at apurinic or apyrimidinic (AP) sites, generating a 3'-hydroxyl group and a 5'-terminal sugar phosphate.</text>
</comment>
<comment type="catalytic activity">
    <reaction evidence="1">
        <text>Endonucleolytic cleavage to 5'-phosphooligonucleotide end-products.</text>
        <dbReference type="EC" id="3.1.21.2"/>
    </reaction>
</comment>
<comment type="cofactor">
    <cofactor evidence="1">
        <name>Zn(2+)</name>
        <dbReference type="ChEBI" id="CHEBI:29105"/>
    </cofactor>
    <text evidence="1">Binds 3 Zn(2+) ions.</text>
</comment>
<comment type="similarity">
    <text evidence="1">Belongs to the AP endonuclease 2 family.</text>
</comment>